<comment type="function">
    <text evidence="1">Necessary for normal cell division and for the maintenance of normal septation.</text>
</comment>
<comment type="cofactor">
    <cofactor evidence="1">
        <name>Mg(2+)</name>
        <dbReference type="ChEBI" id="CHEBI:18420"/>
    </cofactor>
</comment>
<comment type="similarity">
    <text evidence="1">Belongs to the TRAFAC class TrmE-Era-EngA-EngB-Septin-like GTPase superfamily. EngB GTPase family.</text>
</comment>
<accession>B2SG30</accession>
<reference key="1">
    <citation type="journal article" date="2009" name="PLoS Pathog.">
        <title>Molecular evolutionary consequences of niche restriction in Francisella tularensis, a facultative intracellular pathogen.</title>
        <authorList>
            <person name="Larsson P."/>
            <person name="Elfsmark D."/>
            <person name="Svensson K."/>
            <person name="Wikstroem P."/>
            <person name="Forsman M."/>
            <person name="Brettin T."/>
            <person name="Keim P."/>
            <person name="Johansson A."/>
        </authorList>
    </citation>
    <scope>NUCLEOTIDE SEQUENCE [LARGE SCALE GENOMIC DNA]</scope>
    <source>
        <strain>FSC147</strain>
    </source>
</reference>
<proteinExistence type="inferred from homology"/>
<name>ENGB_FRATM</name>
<keyword id="KW-0131">Cell cycle</keyword>
<keyword id="KW-0132">Cell division</keyword>
<keyword id="KW-0342">GTP-binding</keyword>
<keyword id="KW-0460">Magnesium</keyword>
<keyword id="KW-0479">Metal-binding</keyword>
<keyword id="KW-0547">Nucleotide-binding</keyword>
<keyword id="KW-0717">Septation</keyword>
<organism>
    <name type="scientific">Francisella tularensis subsp. mediasiatica (strain FSC147)</name>
    <dbReference type="NCBI Taxonomy" id="441952"/>
    <lineage>
        <taxon>Bacteria</taxon>
        <taxon>Pseudomonadati</taxon>
        <taxon>Pseudomonadota</taxon>
        <taxon>Gammaproteobacteria</taxon>
        <taxon>Thiotrichales</taxon>
        <taxon>Francisellaceae</taxon>
        <taxon>Francisella</taxon>
    </lineage>
</organism>
<protein>
    <recommendedName>
        <fullName evidence="1">Probable GTP-binding protein EngB</fullName>
    </recommendedName>
</protein>
<feature type="chain" id="PRO_1000115973" description="Probable GTP-binding protein EngB">
    <location>
        <begin position="1"/>
        <end position="197"/>
    </location>
</feature>
<feature type="domain" description="EngB-type G" evidence="1">
    <location>
        <begin position="22"/>
        <end position="197"/>
    </location>
</feature>
<feature type="binding site" evidence="1">
    <location>
        <begin position="30"/>
        <end position="37"/>
    </location>
    <ligand>
        <name>GTP</name>
        <dbReference type="ChEBI" id="CHEBI:37565"/>
    </ligand>
</feature>
<feature type="binding site" evidence="1">
    <location>
        <position position="37"/>
    </location>
    <ligand>
        <name>Mg(2+)</name>
        <dbReference type="ChEBI" id="CHEBI:18420"/>
    </ligand>
</feature>
<feature type="binding site" evidence="1">
    <location>
        <begin position="57"/>
        <end position="61"/>
    </location>
    <ligand>
        <name>GTP</name>
        <dbReference type="ChEBI" id="CHEBI:37565"/>
    </ligand>
</feature>
<feature type="binding site" evidence="1">
    <location>
        <position position="59"/>
    </location>
    <ligand>
        <name>Mg(2+)</name>
        <dbReference type="ChEBI" id="CHEBI:18420"/>
    </ligand>
</feature>
<feature type="binding site" evidence="1">
    <location>
        <begin position="75"/>
        <end position="78"/>
    </location>
    <ligand>
        <name>GTP</name>
        <dbReference type="ChEBI" id="CHEBI:37565"/>
    </ligand>
</feature>
<feature type="binding site" evidence="1">
    <location>
        <begin position="142"/>
        <end position="145"/>
    </location>
    <ligand>
        <name>GTP</name>
        <dbReference type="ChEBI" id="CHEBI:37565"/>
    </ligand>
</feature>
<feature type="binding site" evidence="1">
    <location>
        <begin position="177"/>
        <end position="179"/>
    </location>
    <ligand>
        <name>GTP</name>
        <dbReference type="ChEBI" id="CHEBI:37565"/>
    </ligand>
</feature>
<evidence type="ECO:0000255" key="1">
    <source>
        <dbReference type="HAMAP-Rule" id="MF_00321"/>
    </source>
</evidence>
<dbReference type="EMBL" id="CP000915">
    <property type="protein sequence ID" value="ACD30689.1"/>
    <property type="molecule type" value="Genomic_DNA"/>
</dbReference>
<dbReference type="SMR" id="B2SG30"/>
<dbReference type="KEGG" id="ftm:FTM_0711"/>
<dbReference type="HOGENOM" id="CLU_033732_1_0_6"/>
<dbReference type="GO" id="GO:0005829">
    <property type="term" value="C:cytosol"/>
    <property type="evidence" value="ECO:0007669"/>
    <property type="project" value="TreeGrafter"/>
</dbReference>
<dbReference type="GO" id="GO:0005525">
    <property type="term" value="F:GTP binding"/>
    <property type="evidence" value="ECO:0007669"/>
    <property type="project" value="UniProtKB-UniRule"/>
</dbReference>
<dbReference type="GO" id="GO:0046872">
    <property type="term" value="F:metal ion binding"/>
    <property type="evidence" value="ECO:0007669"/>
    <property type="project" value="UniProtKB-KW"/>
</dbReference>
<dbReference type="GO" id="GO:0000917">
    <property type="term" value="P:division septum assembly"/>
    <property type="evidence" value="ECO:0007669"/>
    <property type="project" value="UniProtKB-KW"/>
</dbReference>
<dbReference type="CDD" id="cd01876">
    <property type="entry name" value="YihA_EngB"/>
    <property type="match status" value="1"/>
</dbReference>
<dbReference type="FunFam" id="3.40.50.300:FF:000098">
    <property type="entry name" value="Probable GTP-binding protein EngB"/>
    <property type="match status" value="1"/>
</dbReference>
<dbReference type="Gene3D" id="3.40.50.300">
    <property type="entry name" value="P-loop containing nucleotide triphosphate hydrolases"/>
    <property type="match status" value="1"/>
</dbReference>
<dbReference type="HAMAP" id="MF_00321">
    <property type="entry name" value="GTPase_EngB"/>
    <property type="match status" value="1"/>
</dbReference>
<dbReference type="InterPro" id="IPR030393">
    <property type="entry name" value="G_ENGB_dom"/>
</dbReference>
<dbReference type="InterPro" id="IPR006073">
    <property type="entry name" value="GTP-bd"/>
</dbReference>
<dbReference type="InterPro" id="IPR019987">
    <property type="entry name" value="GTP-bd_ribosome_bio_YsxC"/>
</dbReference>
<dbReference type="InterPro" id="IPR027417">
    <property type="entry name" value="P-loop_NTPase"/>
</dbReference>
<dbReference type="NCBIfam" id="TIGR03598">
    <property type="entry name" value="GTPase_YsxC"/>
    <property type="match status" value="1"/>
</dbReference>
<dbReference type="PANTHER" id="PTHR11649:SF13">
    <property type="entry name" value="ENGB-TYPE G DOMAIN-CONTAINING PROTEIN"/>
    <property type="match status" value="1"/>
</dbReference>
<dbReference type="PANTHER" id="PTHR11649">
    <property type="entry name" value="MSS1/TRME-RELATED GTP-BINDING PROTEIN"/>
    <property type="match status" value="1"/>
</dbReference>
<dbReference type="Pfam" id="PF01926">
    <property type="entry name" value="MMR_HSR1"/>
    <property type="match status" value="1"/>
</dbReference>
<dbReference type="SUPFAM" id="SSF52540">
    <property type="entry name" value="P-loop containing nucleoside triphosphate hydrolases"/>
    <property type="match status" value="1"/>
</dbReference>
<dbReference type="PROSITE" id="PS51706">
    <property type="entry name" value="G_ENGB"/>
    <property type="match status" value="1"/>
</dbReference>
<sequence>MNYSKAKYIMGAAKVSQLPEDTGVEVAFAGRSNAGKSSALNTLTDQKGLARVSKTPGRTQLINLFDLGNNNRLVDLPGYGYAKVSESIKRQWQSEMENYLTSRKCLNGIVLLVDSRHELKEFDSLMIEMAISFDLNLHILLTKADKLNNKERAQANRMIESFLKTFVSTDKISYQLFSSLTKMGLDKFKEKLDTWYQ</sequence>
<gene>
    <name evidence="1" type="primary">engB</name>
    <name type="ordered locus">FTM_0711</name>
</gene>